<accession>A4TGX4</accession>
<proteinExistence type="inferred from homology"/>
<keyword id="KW-0997">Cell inner membrane</keyword>
<keyword id="KW-1003">Cell membrane</keyword>
<keyword id="KW-0472">Membrane</keyword>
<keyword id="KW-0520">NAD</keyword>
<keyword id="KW-0560">Oxidoreductase</keyword>
<protein>
    <recommendedName>
        <fullName evidence="1">Glutathione-regulated potassium-efflux system ancillary protein KefG</fullName>
    </recommendedName>
    <alternativeName>
        <fullName evidence="1">Putative quinone oxidoreductase KefG</fullName>
        <ecNumber evidence="1">1.6.5.2</ecNumber>
    </alternativeName>
</protein>
<name>KEFG_YERPP</name>
<sequence length="182" mass="21200">MLQPPKVLLLYAHPESQDSVANRVLLQPVQQLEHVTVHDLYAHYPDFFIDIHHEQQLLRDHQVIVFQHPLYTYSCPALLKEWLDRVLARGFANGVGGHALTGKHWRSVITTGEQEGTYRIGGYNRYPMEDILRPFELTAAMCHMHWINPMIIYWARRQKPETLASHAQAYVQWLQSPLTRGL</sequence>
<gene>
    <name evidence="1" type="primary">kefG</name>
    <name type="ordered locus">YPDSF_0115</name>
</gene>
<comment type="function">
    <text evidence="1">Regulatory subunit of a potassium efflux system that confers protection against electrophiles. Required for full activity of KefB.</text>
</comment>
<comment type="catalytic activity">
    <reaction evidence="1">
        <text>a quinone + NADH + H(+) = a quinol + NAD(+)</text>
        <dbReference type="Rhea" id="RHEA:46160"/>
        <dbReference type="ChEBI" id="CHEBI:15378"/>
        <dbReference type="ChEBI" id="CHEBI:24646"/>
        <dbReference type="ChEBI" id="CHEBI:57540"/>
        <dbReference type="ChEBI" id="CHEBI:57945"/>
        <dbReference type="ChEBI" id="CHEBI:132124"/>
        <dbReference type="EC" id="1.6.5.2"/>
    </reaction>
</comment>
<comment type="catalytic activity">
    <reaction evidence="1">
        <text>a quinone + NADPH + H(+) = a quinol + NADP(+)</text>
        <dbReference type="Rhea" id="RHEA:46164"/>
        <dbReference type="ChEBI" id="CHEBI:15378"/>
        <dbReference type="ChEBI" id="CHEBI:24646"/>
        <dbReference type="ChEBI" id="CHEBI:57783"/>
        <dbReference type="ChEBI" id="CHEBI:58349"/>
        <dbReference type="ChEBI" id="CHEBI:132124"/>
        <dbReference type="EC" id="1.6.5.2"/>
    </reaction>
</comment>
<comment type="subunit">
    <text evidence="1">Interacts with KefB.</text>
</comment>
<comment type="subcellular location">
    <subcellularLocation>
        <location evidence="1">Cell inner membrane</location>
        <topology evidence="1">Peripheral membrane protein</topology>
        <orientation evidence="1">Cytoplasmic side</orientation>
    </subcellularLocation>
</comment>
<comment type="similarity">
    <text evidence="1">Belongs to the NAD(P)H dehydrogenase (quinone) family. KefG subfamily.</text>
</comment>
<feature type="chain" id="PRO_1000068489" description="Glutathione-regulated potassium-efflux system ancillary protein KefG">
    <location>
        <begin position="1"/>
        <end position="182"/>
    </location>
</feature>
<organism>
    <name type="scientific">Yersinia pestis (strain Pestoides F)</name>
    <dbReference type="NCBI Taxonomy" id="386656"/>
    <lineage>
        <taxon>Bacteria</taxon>
        <taxon>Pseudomonadati</taxon>
        <taxon>Pseudomonadota</taxon>
        <taxon>Gammaproteobacteria</taxon>
        <taxon>Enterobacterales</taxon>
        <taxon>Yersiniaceae</taxon>
        <taxon>Yersinia</taxon>
    </lineage>
</organism>
<evidence type="ECO:0000255" key="1">
    <source>
        <dbReference type="HAMAP-Rule" id="MF_01415"/>
    </source>
</evidence>
<reference key="1">
    <citation type="submission" date="2007-02" db="EMBL/GenBank/DDBJ databases">
        <title>Complete sequence of chromosome of Yersinia pestis Pestoides F.</title>
        <authorList>
            <consortium name="US DOE Joint Genome Institute"/>
            <person name="Copeland A."/>
            <person name="Lucas S."/>
            <person name="Lapidus A."/>
            <person name="Barry K."/>
            <person name="Detter J.C."/>
            <person name="Glavina del Rio T."/>
            <person name="Hammon N."/>
            <person name="Israni S."/>
            <person name="Dalin E."/>
            <person name="Tice H."/>
            <person name="Pitluck S."/>
            <person name="Di Bartolo G."/>
            <person name="Chain P."/>
            <person name="Malfatti S."/>
            <person name="Shin M."/>
            <person name="Vergez L."/>
            <person name="Schmutz J."/>
            <person name="Larimer F."/>
            <person name="Land M."/>
            <person name="Hauser L."/>
            <person name="Worsham P."/>
            <person name="Chu M."/>
            <person name="Bearden S."/>
            <person name="Garcia E."/>
            <person name="Richardson P."/>
        </authorList>
    </citation>
    <scope>NUCLEOTIDE SEQUENCE [LARGE SCALE GENOMIC DNA]</scope>
    <source>
        <strain>Pestoides F</strain>
    </source>
</reference>
<dbReference type="EC" id="1.6.5.2" evidence="1"/>
<dbReference type="EMBL" id="CP000668">
    <property type="protein sequence ID" value="ABP38537.1"/>
    <property type="molecule type" value="Genomic_DNA"/>
</dbReference>
<dbReference type="RefSeq" id="WP_002215966.1">
    <property type="nucleotide sequence ID" value="NZ_CP009715.1"/>
</dbReference>
<dbReference type="SMR" id="A4TGX4"/>
<dbReference type="GeneID" id="57974413"/>
<dbReference type="KEGG" id="ypp:YPDSF_0115"/>
<dbReference type="PATRIC" id="fig|386656.14.peg.452"/>
<dbReference type="GO" id="GO:0005886">
    <property type="term" value="C:plasma membrane"/>
    <property type="evidence" value="ECO:0007669"/>
    <property type="project" value="UniProtKB-SubCell"/>
</dbReference>
<dbReference type="GO" id="GO:0009055">
    <property type="term" value="F:electron transfer activity"/>
    <property type="evidence" value="ECO:0007669"/>
    <property type="project" value="TreeGrafter"/>
</dbReference>
<dbReference type="GO" id="GO:0010181">
    <property type="term" value="F:FMN binding"/>
    <property type="evidence" value="ECO:0007669"/>
    <property type="project" value="TreeGrafter"/>
</dbReference>
<dbReference type="GO" id="GO:0050136">
    <property type="term" value="F:NADH:ubiquinone reductase (non-electrogenic) activity"/>
    <property type="evidence" value="ECO:0007669"/>
    <property type="project" value="RHEA"/>
</dbReference>
<dbReference type="GO" id="GO:0008753">
    <property type="term" value="F:NADPH dehydrogenase (quinone) activity"/>
    <property type="evidence" value="ECO:0007669"/>
    <property type="project" value="RHEA"/>
</dbReference>
<dbReference type="GO" id="GO:1901381">
    <property type="term" value="P:positive regulation of potassium ion transmembrane transport"/>
    <property type="evidence" value="ECO:0007669"/>
    <property type="project" value="UniProtKB-UniRule"/>
</dbReference>
<dbReference type="GO" id="GO:0006813">
    <property type="term" value="P:potassium ion transport"/>
    <property type="evidence" value="ECO:0007669"/>
    <property type="project" value="InterPro"/>
</dbReference>
<dbReference type="FunFam" id="3.40.50.360:FF:000013">
    <property type="entry name" value="Glutathione-regulated potassium-efflux system ancillary protein KefG"/>
    <property type="match status" value="1"/>
</dbReference>
<dbReference type="Gene3D" id="3.40.50.360">
    <property type="match status" value="1"/>
</dbReference>
<dbReference type="HAMAP" id="MF_01415">
    <property type="entry name" value="K_H_efflux_KefG"/>
    <property type="match status" value="1"/>
</dbReference>
<dbReference type="InterPro" id="IPR003680">
    <property type="entry name" value="Flavodoxin_fold"/>
</dbReference>
<dbReference type="InterPro" id="IPR029039">
    <property type="entry name" value="Flavoprotein-like_sf"/>
</dbReference>
<dbReference type="InterPro" id="IPR023947">
    <property type="entry name" value="K_H_efflux_KefG"/>
</dbReference>
<dbReference type="InterPro" id="IPR046980">
    <property type="entry name" value="KefG/KefF"/>
</dbReference>
<dbReference type="NCBIfam" id="NF003430">
    <property type="entry name" value="PRK04930.1"/>
    <property type="match status" value="1"/>
</dbReference>
<dbReference type="PANTHER" id="PTHR47307">
    <property type="entry name" value="GLUTATHIONE-REGULATED POTASSIUM-EFFLUX SYSTEM ANCILLARY PROTEIN KEFG"/>
    <property type="match status" value="1"/>
</dbReference>
<dbReference type="PANTHER" id="PTHR47307:SF1">
    <property type="entry name" value="GLUTATHIONE-REGULATED POTASSIUM-EFFLUX SYSTEM ANCILLARY PROTEIN KEFG"/>
    <property type="match status" value="1"/>
</dbReference>
<dbReference type="Pfam" id="PF02525">
    <property type="entry name" value="Flavodoxin_2"/>
    <property type="match status" value="1"/>
</dbReference>
<dbReference type="SUPFAM" id="SSF52218">
    <property type="entry name" value="Flavoproteins"/>
    <property type="match status" value="1"/>
</dbReference>